<reference key="1">
    <citation type="journal article" date="2005" name="Nature">
        <title>Sequencing of Aspergillus nidulans and comparative analysis with A. fumigatus and A. oryzae.</title>
        <authorList>
            <person name="Galagan J.E."/>
            <person name="Calvo S.E."/>
            <person name="Cuomo C."/>
            <person name="Ma L.-J."/>
            <person name="Wortman J.R."/>
            <person name="Batzoglou S."/>
            <person name="Lee S.-I."/>
            <person name="Bastuerkmen M."/>
            <person name="Spevak C.C."/>
            <person name="Clutterbuck J."/>
            <person name="Kapitonov V."/>
            <person name="Jurka J."/>
            <person name="Scazzocchio C."/>
            <person name="Farman M.L."/>
            <person name="Butler J."/>
            <person name="Purcell S."/>
            <person name="Harris S."/>
            <person name="Braus G.H."/>
            <person name="Draht O."/>
            <person name="Busch S."/>
            <person name="D'Enfert C."/>
            <person name="Bouchier C."/>
            <person name="Goldman G.H."/>
            <person name="Bell-Pedersen D."/>
            <person name="Griffiths-Jones S."/>
            <person name="Doonan J.H."/>
            <person name="Yu J."/>
            <person name="Vienken K."/>
            <person name="Pain A."/>
            <person name="Freitag M."/>
            <person name="Selker E.U."/>
            <person name="Archer D.B."/>
            <person name="Penalva M.A."/>
            <person name="Oakley B.R."/>
            <person name="Momany M."/>
            <person name="Tanaka T."/>
            <person name="Kumagai T."/>
            <person name="Asai K."/>
            <person name="Machida M."/>
            <person name="Nierman W.C."/>
            <person name="Denning D.W."/>
            <person name="Caddick M.X."/>
            <person name="Hynes M."/>
            <person name="Paoletti M."/>
            <person name="Fischer R."/>
            <person name="Miller B.L."/>
            <person name="Dyer P.S."/>
            <person name="Sachs M.S."/>
            <person name="Osmani S.A."/>
            <person name="Birren B.W."/>
        </authorList>
    </citation>
    <scope>NUCLEOTIDE SEQUENCE [LARGE SCALE GENOMIC DNA]</scope>
    <source>
        <strain>FGSC A4 / ATCC 38163 / CBS 112.46 / NRRL 194 / M139</strain>
    </source>
</reference>
<reference key="2">
    <citation type="journal article" date="2009" name="Fungal Genet. Biol.">
        <title>The 2008 update of the Aspergillus nidulans genome annotation: a community effort.</title>
        <authorList>
            <person name="Wortman J.R."/>
            <person name="Gilsenan J.M."/>
            <person name="Joardar V."/>
            <person name="Deegan J."/>
            <person name="Clutterbuck J."/>
            <person name="Andersen M.R."/>
            <person name="Archer D."/>
            <person name="Bencina M."/>
            <person name="Braus G."/>
            <person name="Coutinho P."/>
            <person name="von Dohren H."/>
            <person name="Doonan J."/>
            <person name="Driessen A.J."/>
            <person name="Durek P."/>
            <person name="Espeso E."/>
            <person name="Fekete E."/>
            <person name="Flipphi M."/>
            <person name="Estrada C.G."/>
            <person name="Geysens S."/>
            <person name="Goldman G."/>
            <person name="de Groot P.W."/>
            <person name="Hansen K."/>
            <person name="Harris S.D."/>
            <person name="Heinekamp T."/>
            <person name="Helmstaedt K."/>
            <person name="Henrissat B."/>
            <person name="Hofmann G."/>
            <person name="Homan T."/>
            <person name="Horio T."/>
            <person name="Horiuchi H."/>
            <person name="James S."/>
            <person name="Jones M."/>
            <person name="Karaffa L."/>
            <person name="Karanyi Z."/>
            <person name="Kato M."/>
            <person name="Keller N."/>
            <person name="Kelly D.E."/>
            <person name="Kiel J.A."/>
            <person name="Kim J.M."/>
            <person name="van der Klei I.J."/>
            <person name="Klis F.M."/>
            <person name="Kovalchuk A."/>
            <person name="Krasevec N."/>
            <person name="Kubicek C.P."/>
            <person name="Liu B."/>
            <person name="Maccabe A."/>
            <person name="Meyer V."/>
            <person name="Mirabito P."/>
            <person name="Miskei M."/>
            <person name="Mos M."/>
            <person name="Mullins J."/>
            <person name="Nelson D.R."/>
            <person name="Nielsen J."/>
            <person name="Oakley B.R."/>
            <person name="Osmani S.A."/>
            <person name="Pakula T."/>
            <person name="Paszewski A."/>
            <person name="Paulsen I."/>
            <person name="Pilsyk S."/>
            <person name="Pocsi I."/>
            <person name="Punt P.J."/>
            <person name="Ram A.F."/>
            <person name="Ren Q."/>
            <person name="Robellet X."/>
            <person name="Robson G."/>
            <person name="Seiboth B."/>
            <person name="van Solingen P."/>
            <person name="Specht T."/>
            <person name="Sun J."/>
            <person name="Taheri-Talesh N."/>
            <person name="Takeshita N."/>
            <person name="Ussery D."/>
            <person name="vanKuyk P.A."/>
            <person name="Visser H."/>
            <person name="van de Vondervoort P.J."/>
            <person name="de Vries R.P."/>
            <person name="Walton J."/>
            <person name="Xiang X."/>
            <person name="Xiong Y."/>
            <person name="Zeng A.P."/>
            <person name="Brandt B.W."/>
            <person name="Cornell M.J."/>
            <person name="van den Hondel C.A."/>
            <person name="Visser J."/>
            <person name="Oliver S.G."/>
            <person name="Turner G."/>
        </authorList>
    </citation>
    <scope>GENOME REANNOTATION</scope>
    <source>
        <strain>FGSC A4 / ATCC 38163 / CBS 112.46 / NRRL 194 / M139</strain>
    </source>
</reference>
<reference key="3">
    <citation type="journal article" date="2009" name="Proc. Natl. Acad. Sci. U.S.A.">
        <title>Intimate bacterial-fungal interaction triggers biosynthesis of archetypal polyketides in Aspergillus nidulans.</title>
        <authorList>
            <person name="Schroeckh V."/>
            <person name="Scherlach K."/>
            <person name="Nuetzmann H.W."/>
            <person name="Shelest E."/>
            <person name="Schmidt-Heck W."/>
            <person name="Schuemann J."/>
            <person name="Martin K."/>
            <person name="Hertweck C."/>
            <person name="Brakhage A.A."/>
        </authorList>
    </citation>
    <scope>IDENTIFICATION OF THE ORS CLUSTER</scope>
    <scope>FUNCTION</scope>
    <scope>INDUCTION</scope>
</reference>
<reference key="4">
    <citation type="journal article" date="2010" name="Mol. Biosyst.">
        <title>Molecular genetic analysis of the orsellinic acid/F9775 gene cluster of Aspergillus nidulans.</title>
        <authorList>
            <person name="Sanchez J.F."/>
            <person name="Chiang Y.M."/>
            <person name="Szewczyk E."/>
            <person name="Davidson A.D."/>
            <person name="Ahuja M."/>
            <person name="Elizabeth Oakley C."/>
            <person name="Woo Bok J."/>
            <person name="Keller N."/>
            <person name="Oakley B.R."/>
            <person name="Wang C.C."/>
        </authorList>
    </citation>
    <scope>FUNCTION</scope>
</reference>
<reference key="5">
    <citation type="journal article" date="2013" name="Appl. Environ. Microbiol.">
        <title>Distinct amino acids of histone H3 control secondary metabolism in Aspergillus nidulans.</title>
        <authorList>
            <person name="Nuetzmann H.W."/>
            <person name="Fischer J."/>
            <person name="Scherlach K."/>
            <person name="Hertweck C."/>
            <person name="Brakhage A.A."/>
        </authorList>
    </citation>
    <scope>INDUCTION</scope>
</reference>
<reference key="6">
    <citation type="journal article" date="2013" name="Mol. Microbiol.">
        <title>VeA and MvlA repression of the cryptic orsellinic acid gene cluster in Aspergillus nidulans involves histone 3 acetylation.</title>
        <authorList>
            <person name="Bok J.W."/>
            <person name="Soukup A.A."/>
            <person name="Chadwick E."/>
            <person name="Chiang Y.M."/>
            <person name="Wang C.C."/>
            <person name="Keller N.P."/>
        </authorList>
    </citation>
    <scope>INDUCTION</scope>
</reference>
<sequence length="501" mass="55729">MPPVRFGPRKILEYDGRYGVLICHECRYAIQKSALQSHLLRHKIYRADRQQLVAMINELDLLEPDDVLLPPPESPPIDGLPVIAGYRCTAPGCANLCASLKRMKGHWRESHGIADASLARPAKLQTFFRGTKIRYFEVTPTTEDEDDEENESENDEEEGDVDLEEQEDDNGGRQSTTVTTSPGPSAPSVNVDLETLSYFHHFMSATSLTLPCPQDMQSGAQYWKEKAVPQALQQRWLMCGLLALAACHLAAFPDNAAAGQQHRKRAAEFSLEFRTGWRELADTSGEGLREVATEIECLLRCAHWALAESPCDQRIMPEPGVPEHLQSIISTIQSTVPAAAPHEAETSAYATRILRWNTSEAGNSVLAEIRNRLHDLPARMADTFGRPENIQDVLVLLSALAAMGECCDTSFASEEVGPAWWGMATWWTRVPLRFKELVARHYPASLVVVAHWAALMVNRTERCGCWLVKGLAMTILLRIAERLPEDDDGNVQRLVALTIAA</sequence>
<accession>Q5AUW7</accession>
<accession>C8V4V3</accession>
<proteinExistence type="evidence at transcript level"/>
<gene>
    <name evidence="6" type="primary">orsD</name>
    <name type="ORF">AN7913</name>
</gene>
<keyword id="KW-1185">Reference proteome</keyword>
<evidence type="ECO:0000256" key="1">
    <source>
        <dbReference type="SAM" id="MobiDB-lite"/>
    </source>
</evidence>
<evidence type="ECO:0000269" key="2">
    <source>
    </source>
</evidence>
<evidence type="ECO:0000269" key="3">
    <source>
    </source>
</evidence>
<evidence type="ECO:0000269" key="4">
    <source>
    </source>
</evidence>
<evidence type="ECO:0000269" key="5">
    <source>
    </source>
</evidence>
<evidence type="ECO:0000303" key="6">
    <source>
    </source>
</evidence>
<organism>
    <name type="scientific">Emericella nidulans (strain FGSC A4 / ATCC 38163 / CBS 112.46 / NRRL 194 / M139)</name>
    <name type="common">Aspergillus nidulans</name>
    <dbReference type="NCBI Taxonomy" id="227321"/>
    <lineage>
        <taxon>Eukaryota</taxon>
        <taxon>Fungi</taxon>
        <taxon>Dikarya</taxon>
        <taxon>Ascomycota</taxon>
        <taxon>Pezizomycotina</taxon>
        <taxon>Eurotiomycetes</taxon>
        <taxon>Eurotiomycetidae</taxon>
        <taxon>Eurotiales</taxon>
        <taxon>Aspergillaceae</taxon>
        <taxon>Aspergillus</taxon>
        <taxon>Aspergillus subgen. Nidulantes</taxon>
    </lineage>
</organism>
<name>ORSD_EMENI</name>
<comment type="function">
    <text evidence="2 3">Part of the gene cluster that mediates the biosynthesis of orsellinic acid, as well as of the cathepsin K inhibitors F9775 A and F9775 B (PubMed:19666480, PubMed:20174687). The non-reducing polyketide synthase orsA produces orsellinic acid by condensing acetyl-CoA with 3 malonyl-CoA units (PubMed:19666480, PubMed:20174687). Further modifications by the decarboxylase orsB and the tyrosinase-like protein orsC lead to the production of F9775 A and F9775 B (PubMed:20174687). The functions of orsD and orsE remain unclear since only orsB and orsC are required to convert orsellinic acid into F9775 A and F9775 B (PubMed:20174687).</text>
</comment>
<comment type="induction">
    <text evidence="2 4 5">Expression is induced by an intimate physical interaction of the fungal mycelia with the bacterium Streptomyces hygroscopicus (PubMed:19666480). Expression is repressed by VeA and MvlA via histone 3 acetylation by the SAGA/ADA complex (PubMed:23841751, PubMed:23892751).</text>
</comment>
<feature type="chain" id="PRO_0000438569" description="Orsellinic acid/F9775 biosynthesis cluster protein D">
    <location>
        <begin position="1"/>
        <end position="501"/>
    </location>
</feature>
<feature type="region of interest" description="Disordered" evidence="1">
    <location>
        <begin position="137"/>
        <end position="189"/>
    </location>
</feature>
<feature type="compositionally biased region" description="Acidic residues" evidence="1">
    <location>
        <begin position="142"/>
        <end position="169"/>
    </location>
</feature>
<feature type="compositionally biased region" description="Polar residues" evidence="1">
    <location>
        <begin position="172"/>
        <end position="183"/>
    </location>
</feature>
<protein>
    <recommendedName>
        <fullName evidence="6">Orsellinic acid/F9775 biosynthesis cluster protein D</fullName>
    </recommendedName>
</protein>
<dbReference type="EMBL" id="BN001302">
    <property type="protein sequence ID" value="CBF73511.1"/>
    <property type="molecule type" value="Genomic_DNA"/>
</dbReference>
<dbReference type="EMBL" id="AACD01000135">
    <property type="protein sequence ID" value="EAA59567.1"/>
    <property type="molecule type" value="Genomic_DNA"/>
</dbReference>
<dbReference type="RefSeq" id="XP_681182.1">
    <property type="nucleotide sequence ID" value="XM_676090.1"/>
</dbReference>
<dbReference type="STRING" id="227321.Q5AUW7"/>
<dbReference type="EnsemblFungi" id="CBF73511">
    <property type="protein sequence ID" value="CBF73511"/>
    <property type="gene ID" value="ANIA_07913"/>
</dbReference>
<dbReference type="KEGG" id="ani:ANIA_07913"/>
<dbReference type="eggNOG" id="ENOG502SKNG">
    <property type="taxonomic scope" value="Eukaryota"/>
</dbReference>
<dbReference type="HOGENOM" id="CLU_024934_8_0_1"/>
<dbReference type="InParanoid" id="Q5AUW7"/>
<dbReference type="OMA" id="HWRESHG"/>
<dbReference type="OrthoDB" id="416217at2759"/>
<dbReference type="Proteomes" id="UP000000560">
    <property type="component" value="Chromosome II"/>
</dbReference>
<dbReference type="GO" id="GO:0000981">
    <property type="term" value="F:DNA-binding transcription factor activity, RNA polymerase II-specific"/>
    <property type="evidence" value="ECO:0000318"/>
    <property type="project" value="GO_Central"/>
</dbReference>
<dbReference type="GO" id="GO:0006357">
    <property type="term" value="P:regulation of transcription by RNA polymerase II"/>
    <property type="evidence" value="ECO:0000318"/>
    <property type="project" value="GO_Central"/>
</dbReference>
<dbReference type="InterPro" id="IPR022698">
    <property type="entry name" value="OrsD"/>
</dbReference>
<dbReference type="InterPro" id="IPR052400">
    <property type="entry name" value="Zn2-C6_fungal_TF"/>
</dbReference>
<dbReference type="InterPro" id="IPR013087">
    <property type="entry name" value="Znf_C2H2_type"/>
</dbReference>
<dbReference type="PANTHER" id="PTHR47657:SF3">
    <property type="entry name" value="ORSELLINIC ACID_F9775 BIOSYNTHESIS CLUSTER PROTEIN D-RELATED"/>
    <property type="match status" value="1"/>
</dbReference>
<dbReference type="PANTHER" id="PTHR47657">
    <property type="entry name" value="STEROL REGULATORY ELEMENT-BINDING PROTEIN ECM22"/>
    <property type="match status" value="1"/>
</dbReference>
<dbReference type="Pfam" id="PF12013">
    <property type="entry name" value="OrsD"/>
    <property type="match status" value="1"/>
</dbReference>
<dbReference type="SMART" id="SM00355">
    <property type="entry name" value="ZnF_C2H2"/>
    <property type="match status" value="2"/>
</dbReference>